<organism>
    <name type="scientific">Rattus norvegicus</name>
    <name type="common">Rat</name>
    <dbReference type="NCBI Taxonomy" id="10116"/>
    <lineage>
        <taxon>Eukaryota</taxon>
        <taxon>Metazoa</taxon>
        <taxon>Chordata</taxon>
        <taxon>Craniata</taxon>
        <taxon>Vertebrata</taxon>
        <taxon>Euteleostomi</taxon>
        <taxon>Mammalia</taxon>
        <taxon>Eutheria</taxon>
        <taxon>Euarchontoglires</taxon>
        <taxon>Glires</taxon>
        <taxon>Rodentia</taxon>
        <taxon>Myomorpha</taxon>
        <taxon>Muroidea</taxon>
        <taxon>Muridae</taxon>
        <taxon>Murinae</taxon>
        <taxon>Rattus</taxon>
    </lineage>
</organism>
<proteinExistence type="evidence at transcript level"/>
<reference key="1">
    <citation type="journal article" date="1988" name="Development">
        <title>The expression of rat homeobox-containing genes is developmentally regulated and tissue specific.</title>
        <authorList>
            <person name="Falzon M."/>
            <person name="Chung S.Y."/>
        </authorList>
    </citation>
    <scope>NUCLEOTIDE SEQUENCE [GENOMIC DNA]</scope>
    <source>
        <strain>Sprague-Dawley</strain>
    </source>
</reference>
<dbReference type="EMBL" id="M37567">
    <property type="protein sequence ID" value="AAA41343.1"/>
    <property type="molecule type" value="Genomic_DNA"/>
</dbReference>
<dbReference type="PIR" id="C43559">
    <property type="entry name" value="C43559"/>
</dbReference>
<dbReference type="SMR" id="P18865"/>
<dbReference type="FunCoup" id="P18865">
    <property type="interactions" value="139"/>
</dbReference>
<dbReference type="STRING" id="10116.ENSRNOP00000022398"/>
<dbReference type="PhosphoSitePlus" id="P18865"/>
<dbReference type="PaxDb" id="10116-ENSRNOP00000022398"/>
<dbReference type="UCSC" id="RGD:1586210">
    <property type="organism name" value="rat"/>
</dbReference>
<dbReference type="AGR" id="RGD:1586210"/>
<dbReference type="RGD" id="1586210">
    <property type="gene designation" value="Hoxc4"/>
</dbReference>
<dbReference type="InParanoid" id="P18865"/>
<dbReference type="Proteomes" id="UP000002494">
    <property type="component" value="Unplaced"/>
</dbReference>
<dbReference type="GO" id="GO:0005634">
    <property type="term" value="C:nucleus"/>
    <property type="evidence" value="ECO:0007669"/>
    <property type="project" value="UniProtKB-SubCell"/>
</dbReference>
<dbReference type="GO" id="GO:0001228">
    <property type="term" value="F:DNA-binding transcription activator activity, RNA polymerase II-specific"/>
    <property type="evidence" value="ECO:0000266"/>
    <property type="project" value="RGD"/>
</dbReference>
<dbReference type="GO" id="GO:0071837">
    <property type="term" value="F:HMG box domain binding"/>
    <property type="evidence" value="ECO:0000266"/>
    <property type="project" value="RGD"/>
</dbReference>
<dbReference type="GO" id="GO:0000978">
    <property type="term" value="F:RNA polymerase II cis-regulatory region sequence-specific DNA binding"/>
    <property type="evidence" value="ECO:0000266"/>
    <property type="project" value="RGD"/>
</dbReference>
<dbReference type="GO" id="GO:1990837">
    <property type="term" value="F:sequence-specific double-stranded DNA binding"/>
    <property type="evidence" value="ECO:0000266"/>
    <property type="project" value="RGD"/>
</dbReference>
<dbReference type="GO" id="GO:0009952">
    <property type="term" value="P:anterior/posterior pattern specification"/>
    <property type="evidence" value="ECO:0000266"/>
    <property type="project" value="RGD"/>
</dbReference>
<dbReference type="GO" id="GO:0051216">
    <property type="term" value="P:cartilage development"/>
    <property type="evidence" value="ECO:0000266"/>
    <property type="project" value="RGD"/>
</dbReference>
<dbReference type="GO" id="GO:1990792">
    <property type="term" value="P:cellular response to glial cell derived neurotrophic factor"/>
    <property type="evidence" value="ECO:0000270"/>
    <property type="project" value="RGD"/>
</dbReference>
<dbReference type="GO" id="GO:0048562">
    <property type="term" value="P:embryonic organ morphogenesis"/>
    <property type="evidence" value="ECO:0000266"/>
    <property type="project" value="RGD"/>
</dbReference>
<dbReference type="GO" id="GO:1904840">
    <property type="term" value="P:positive regulation of male germ-line stem cell asymmetric division"/>
    <property type="evidence" value="ECO:0000315"/>
    <property type="project" value="RGD"/>
</dbReference>
<dbReference type="GO" id="GO:0045944">
    <property type="term" value="P:positive regulation of transcription by RNA polymerase II"/>
    <property type="evidence" value="ECO:0000266"/>
    <property type="project" value="RGD"/>
</dbReference>
<dbReference type="GO" id="GO:0001501">
    <property type="term" value="P:skeletal system development"/>
    <property type="evidence" value="ECO:0000266"/>
    <property type="project" value="RGD"/>
</dbReference>
<dbReference type="CDD" id="cd00086">
    <property type="entry name" value="homeodomain"/>
    <property type="match status" value="1"/>
</dbReference>
<dbReference type="Gene3D" id="1.10.10.60">
    <property type="entry name" value="Homeodomain-like"/>
    <property type="match status" value="1"/>
</dbReference>
<dbReference type="InterPro" id="IPR050609">
    <property type="entry name" value="Antp_homeobox_Deformed_sf"/>
</dbReference>
<dbReference type="InterPro" id="IPR001356">
    <property type="entry name" value="HD"/>
</dbReference>
<dbReference type="InterPro" id="IPR020479">
    <property type="entry name" value="HD_metazoa"/>
</dbReference>
<dbReference type="InterPro" id="IPR017970">
    <property type="entry name" value="Homeobox_CS"/>
</dbReference>
<dbReference type="InterPro" id="IPR009057">
    <property type="entry name" value="Homeodomain-like_sf"/>
</dbReference>
<dbReference type="PANTHER" id="PTHR45771:SF9">
    <property type="entry name" value="HOMEOBOX PROTEIN HOX-C4"/>
    <property type="match status" value="1"/>
</dbReference>
<dbReference type="PANTHER" id="PTHR45771">
    <property type="entry name" value="HOMEOTIC PROTEIN DEFORMED"/>
    <property type="match status" value="1"/>
</dbReference>
<dbReference type="Pfam" id="PF00046">
    <property type="entry name" value="Homeodomain"/>
    <property type="match status" value="1"/>
</dbReference>
<dbReference type="PRINTS" id="PR00024">
    <property type="entry name" value="HOMEOBOX"/>
</dbReference>
<dbReference type="SMART" id="SM00389">
    <property type="entry name" value="HOX"/>
    <property type="match status" value="1"/>
</dbReference>
<dbReference type="SUPFAM" id="SSF46689">
    <property type="entry name" value="Homeodomain-like"/>
    <property type="match status" value="1"/>
</dbReference>
<dbReference type="PROSITE" id="PS00027">
    <property type="entry name" value="HOMEOBOX_1"/>
    <property type="match status" value="1"/>
</dbReference>
<dbReference type="PROSITE" id="PS50071">
    <property type="entry name" value="HOMEOBOX_2"/>
    <property type="match status" value="1"/>
</dbReference>
<accession>P18865</accession>
<keyword id="KW-0217">Developmental protein</keyword>
<keyword id="KW-0238">DNA-binding</keyword>
<keyword id="KW-0371">Homeobox</keyword>
<keyword id="KW-0539">Nucleus</keyword>
<keyword id="KW-1185">Reference proteome</keyword>
<keyword id="KW-0804">Transcription</keyword>
<keyword id="KW-0805">Transcription regulation</keyword>
<protein>
    <recommendedName>
        <fullName>Homeobox protein Hox-C4</fullName>
    </recommendedName>
    <alternativeName>
        <fullName>Homeobox protein R3</fullName>
    </alternativeName>
</protein>
<evidence type="ECO:0000255" key="1">
    <source>
        <dbReference type="PROSITE-ProRule" id="PRU00108"/>
    </source>
</evidence>
<evidence type="ECO:0000305" key="2"/>
<feature type="chain" id="PRO_0000200166" description="Homeobox protein Hox-C4">
    <location>
        <begin position="1" status="less than"/>
        <end position="76"/>
    </location>
</feature>
<feature type="DNA-binding region" description="Homeobox" evidence="1">
    <location>
        <begin position="11"/>
        <end position="70"/>
    </location>
</feature>
<feature type="non-terminal residue">
    <location>
        <position position="1"/>
    </location>
</feature>
<sequence length="76" mass="9293">LVVMLESRFPGPARGVANCRQQVLELEKEFHYNRYLTRRRRIEIAHSLCLSERQIKIWFQNRRMKWKKDHDSPTPK</sequence>
<name>HXC4_RAT</name>
<gene>
    <name type="primary">Hoxc4</name>
    <name type="synonym">Hoxc-4</name>
</gene>
<comment type="function">
    <text>Sequence-specific transcription factor which is part of a developmental regulatory system that provides cells with specific positional identities on the anterior-posterior axis.</text>
</comment>
<comment type="subcellular location">
    <subcellularLocation>
        <location>Nucleus</location>
    </subcellularLocation>
</comment>
<comment type="tissue specificity">
    <text>Predominantly spinal cord and kidney.</text>
</comment>
<comment type="similarity">
    <text evidence="2">Belongs to the Antp homeobox family. Deformed subfamily.</text>
</comment>